<protein>
    <recommendedName>
        <fullName>ATPase synthesis protein 25, mitochondrial</fullName>
    </recommendedName>
</protein>
<keyword id="KW-0472">Membrane</keyword>
<keyword id="KW-0496">Mitochondrion</keyword>
<keyword id="KW-0999">Mitochondrion inner membrane</keyword>
<keyword id="KW-1185">Reference proteome</keyword>
<keyword id="KW-0809">Transit peptide</keyword>
<proteinExistence type="inferred from homology"/>
<sequence length="586" mass="66565">MLRAGRYSKASSVLRAVGGKRPSVCMASRVLTRLYSNGKEDDQVASSSSPSSKPWYLQGTGKPEIDVTSPFVGKIKLPATPVPDTVVNVTEYMRDKLGVTDITCFNTHEAHRPCVKNGYVILGCVKSTRHGARSMIELMRFLKTEYGVLPQKEGGISVQELRKRQKRLQRKGNLTSASAELAGESDWYLIDSKLYDGNGSGVFVHLLTKEKREDLNLEGLYCTSEERGLYQKKVLSPSNDHLPNDDDDNVLAGLKRLALQNSRRYYSSTSSATADYARSSLQGGSNMENSDAPLFSLVDSLAQLPETEELDPQEWIRSLDAKWAFIDLTEKHWQARWLMYRLLYVNRLHALQRAQDGDSANLDHLKRDLTFCYKTLLEYFTLKQAMNGRLNKEELVGMLDIMLTQKELNGGYSKLVKHNRVLQQLLDHYKFHEPELFRDEQITIRTLKLMVSSQAKLNVLSEFVRFLRDTGYTNRNVAIKCIEILAEAKEWRELKTFMFRDTTAALLSDPMVWAHFLRSILAHGEPLLWRSLIDDGSILWLVRCGVDVRACEELHSALLELFQRAGYDAVKADSLLRDYIQDGACS</sequence>
<reference key="1">
    <citation type="journal article" date="2004" name="Science">
        <title>The Ashbya gossypii genome as a tool for mapping the ancient Saccharomyces cerevisiae genome.</title>
        <authorList>
            <person name="Dietrich F.S."/>
            <person name="Voegeli S."/>
            <person name="Brachat S."/>
            <person name="Lerch A."/>
            <person name="Gates K."/>
            <person name="Steiner S."/>
            <person name="Mohr C."/>
            <person name="Poehlmann R."/>
            <person name="Luedi P."/>
            <person name="Choi S."/>
            <person name="Wing R.A."/>
            <person name="Flavier A."/>
            <person name="Gaffney T.D."/>
            <person name="Philippsen P."/>
        </authorList>
    </citation>
    <scope>NUCLEOTIDE SEQUENCE [LARGE SCALE GENOMIC DNA]</scope>
    <source>
        <strain>ATCC 10895 / CBS 109.51 / FGSC 9923 / NRRL Y-1056</strain>
    </source>
</reference>
<reference key="2">
    <citation type="journal article" date="2013" name="G3 (Bethesda)">
        <title>Genomes of Ashbya fungi isolated from insects reveal four mating-type loci, numerous translocations, lack of transposons, and distinct gene duplications.</title>
        <authorList>
            <person name="Dietrich F.S."/>
            <person name="Voegeli S."/>
            <person name="Kuo S."/>
            <person name="Philippsen P."/>
        </authorList>
    </citation>
    <scope>GENOME REANNOTATION</scope>
    <source>
        <strain>ATCC 10895 / CBS 109.51 / FGSC 9923 / NRRL Y-1056</strain>
    </source>
</reference>
<accession>Q75DR7</accession>
<evidence type="ECO:0000250" key="1"/>
<evidence type="ECO:0000255" key="2"/>
<evidence type="ECO:0000256" key="3">
    <source>
        <dbReference type="SAM" id="MobiDB-lite"/>
    </source>
</evidence>
<evidence type="ECO:0000305" key="4"/>
<dbReference type="EMBL" id="AE016815">
    <property type="protein sequence ID" value="AAS50721.2"/>
    <property type="molecule type" value="Genomic_DNA"/>
</dbReference>
<dbReference type="RefSeq" id="NP_982897.2">
    <property type="nucleotide sequence ID" value="NM_208250.2"/>
</dbReference>
<dbReference type="SMR" id="Q75DR7"/>
<dbReference type="FunCoup" id="Q75DR7">
    <property type="interactions" value="90"/>
</dbReference>
<dbReference type="STRING" id="284811.Q75DR7"/>
<dbReference type="EnsemblFungi" id="AAS50721">
    <property type="protein sequence ID" value="AAS50721"/>
    <property type="gene ID" value="AGOS_ABL050W"/>
</dbReference>
<dbReference type="GeneID" id="4618980"/>
<dbReference type="KEGG" id="ago:AGOS_ABL050W"/>
<dbReference type="eggNOG" id="ENOG502RGZN">
    <property type="taxonomic scope" value="Eukaryota"/>
</dbReference>
<dbReference type="HOGENOM" id="CLU_487522_0_0_1"/>
<dbReference type="InParanoid" id="Q75DR7"/>
<dbReference type="OMA" id="SWYMIDC"/>
<dbReference type="OrthoDB" id="107372at2759"/>
<dbReference type="Proteomes" id="UP000000591">
    <property type="component" value="Chromosome II"/>
</dbReference>
<dbReference type="GO" id="GO:0005743">
    <property type="term" value="C:mitochondrial inner membrane"/>
    <property type="evidence" value="ECO:0007669"/>
    <property type="project" value="UniProtKB-SubCell"/>
</dbReference>
<dbReference type="GO" id="GO:0005739">
    <property type="term" value="C:mitochondrion"/>
    <property type="evidence" value="ECO:0000318"/>
    <property type="project" value="GO_Central"/>
</dbReference>
<dbReference type="GO" id="GO:0140053">
    <property type="term" value="P:mitochondrial gene expression"/>
    <property type="evidence" value="ECO:0007669"/>
    <property type="project" value="InterPro"/>
</dbReference>
<dbReference type="GO" id="GO:0048255">
    <property type="term" value="P:mRNA stabilization"/>
    <property type="evidence" value="ECO:0000318"/>
    <property type="project" value="GO_Central"/>
</dbReference>
<dbReference type="Gene3D" id="3.30.460.10">
    <property type="entry name" value="Beta Polymerase, domain 2"/>
    <property type="match status" value="1"/>
</dbReference>
<dbReference type="InterPro" id="IPR040152">
    <property type="entry name" value="Atp25"/>
</dbReference>
<dbReference type="InterPro" id="IPR025210">
    <property type="entry name" value="ATP25_mRNA_stabil_dom"/>
</dbReference>
<dbReference type="InterPro" id="IPR043519">
    <property type="entry name" value="NT_sf"/>
</dbReference>
<dbReference type="PANTHER" id="PTHR28087">
    <property type="entry name" value="ATPASE SYNTHESIS PROTEIN 25, MITOCHONDRIAL"/>
    <property type="match status" value="1"/>
</dbReference>
<dbReference type="PANTHER" id="PTHR28087:SF1">
    <property type="entry name" value="ATPASE SYNTHESIS PROTEIN 25, MITOCHONDRIAL"/>
    <property type="match status" value="1"/>
</dbReference>
<dbReference type="Pfam" id="PF13929">
    <property type="entry name" value="mRNA_stabil"/>
    <property type="match status" value="1"/>
</dbReference>
<dbReference type="Pfam" id="PF02410">
    <property type="entry name" value="RsfS"/>
    <property type="match status" value="1"/>
</dbReference>
<dbReference type="SUPFAM" id="SSF81301">
    <property type="entry name" value="Nucleotidyltransferase"/>
    <property type="match status" value="1"/>
</dbReference>
<comment type="function">
    <text evidence="1">Probable mitochondrial mRNA stabilization factor.</text>
</comment>
<comment type="subcellular location">
    <subcellularLocation>
        <location evidence="1">Mitochondrion inner membrane</location>
        <topology evidence="1">Peripheral membrane protein</topology>
        <orientation evidence="1">Matrix side</orientation>
    </subcellularLocation>
</comment>
<comment type="similarity">
    <text evidence="4">Belongs to the ATP25 family.</text>
</comment>
<feature type="transit peptide" description="Mitochondrion" evidence="2">
    <location>
        <begin position="1"/>
        <end position="35"/>
    </location>
</feature>
<feature type="chain" id="PRO_0000404459" description="ATPase synthesis protein 25, mitochondrial">
    <location>
        <begin position="36"/>
        <end position="586"/>
    </location>
</feature>
<feature type="region of interest" description="Disordered" evidence="3">
    <location>
        <begin position="39"/>
        <end position="59"/>
    </location>
</feature>
<name>ATP25_EREGS</name>
<gene>
    <name type="primary">ATP25</name>
    <name type="ordered locus">ABL050W</name>
</gene>
<organism>
    <name type="scientific">Eremothecium gossypii (strain ATCC 10895 / CBS 109.51 / FGSC 9923 / NRRL Y-1056)</name>
    <name type="common">Yeast</name>
    <name type="synonym">Ashbya gossypii</name>
    <dbReference type="NCBI Taxonomy" id="284811"/>
    <lineage>
        <taxon>Eukaryota</taxon>
        <taxon>Fungi</taxon>
        <taxon>Dikarya</taxon>
        <taxon>Ascomycota</taxon>
        <taxon>Saccharomycotina</taxon>
        <taxon>Saccharomycetes</taxon>
        <taxon>Saccharomycetales</taxon>
        <taxon>Saccharomycetaceae</taxon>
        <taxon>Eremothecium</taxon>
    </lineage>
</organism>